<name>YCF4_POPAL</name>
<sequence>MSWRSEHIWIELIAGSRKISNFCWAIILFLGSLGFLLIGISSYLDRNLISLFPSQQIIFFPQGLVMSFYGLAGLFISSYLWCTISWNVGSGYDRFDRKEGIVCIFRWGFPGKNRRILLRLFMKDIQSIRIEVKEGFYARRVLYMEIRGQGAIPLTRTDENLTPREIEQKAAELAYFLRVPIEVF</sequence>
<comment type="function">
    <text evidence="1">Seems to be required for the assembly of the photosystem I complex.</text>
</comment>
<comment type="subcellular location">
    <subcellularLocation>
        <location evidence="1">Plastid</location>
        <location evidence="1">Chloroplast thylakoid membrane</location>
        <topology evidence="1">Multi-pass membrane protein</topology>
    </subcellularLocation>
</comment>
<comment type="similarity">
    <text evidence="1">Belongs to the Ycf4 family.</text>
</comment>
<proteinExistence type="inferred from homology"/>
<evidence type="ECO:0000255" key="1">
    <source>
        <dbReference type="HAMAP-Rule" id="MF_00437"/>
    </source>
</evidence>
<gene>
    <name evidence="1" type="primary">ycf4</name>
</gene>
<feature type="chain" id="PRO_0000275668" description="Photosystem I assembly protein Ycf4">
    <location>
        <begin position="1"/>
        <end position="184"/>
    </location>
</feature>
<feature type="transmembrane region" description="Helical" evidence="1">
    <location>
        <begin position="22"/>
        <end position="42"/>
    </location>
</feature>
<feature type="transmembrane region" description="Helical" evidence="1">
    <location>
        <begin position="57"/>
        <end position="77"/>
    </location>
</feature>
<accession>Q14FE6</accession>
<dbReference type="EMBL" id="AP008956">
    <property type="protein sequence ID" value="BAE97216.1"/>
    <property type="molecule type" value="Genomic_DNA"/>
</dbReference>
<dbReference type="RefSeq" id="YP_665569.1">
    <property type="nucleotide sequence ID" value="NC_008235.1"/>
</dbReference>
<dbReference type="GeneID" id="4178203"/>
<dbReference type="KEGG" id="palz:4178203"/>
<dbReference type="OrthoDB" id="19459at3646"/>
<dbReference type="GO" id="GO:0009535">
    <property type="term" value="C:chloroplast thylakoid membrane"/>
    <property type="evidence" value="ECO:0007669"/>
    <property type="project" value="UniProtKB-SubCell"/>
</dbReference>
<dbReference type="GO" id="GO:0009522">
    <property type="term" value="C:photosystem I"/>
    <property type="evidence" value="ECO:0007669"/>
    <property type="project" value="InterPro"/>
</dbReference>
<dbReference type="GO" id="GO:0015979">
    <property type="term" value="P:photosynthesis"/>
    <property type="evidence" value="ECO:0007669"/>
    <property type="project" value="UniProtKB-UniRule"/>
</dbReference>
<dbReference type="HAMAP" id="MF_00437">
    <property type="entry name" value="Ycf4"/>
    <property type="match status" value="1"/>
</dbReference>
<dbReference type="InterPro" id="IPR003359">
    <property type="entry name" value="PSI_Ycf4_assembly"/>
</dbReference>
<dbReference type="PANTHER" id="PTHR33288">
    <property type="match status" value="1"/>
</dbReference>
<dbReference type="PANTHER" id="PTHR33288:SF4">
    <property type="entry name" value="PHOTOSYSTEM I ASSEMBLY PROTEIN YCF4"/>
    <property type="match status" value="1"/>
</dbReference>
<dbReference type="Pfam" id="PF02392">
    <property type="entry name" value="Ycf4"/>
    <property type="match status" value="1"/>
</dbReference>
<reference key="1">
    <citation type="submission" date="2005-03" db="EMBL/GenBank/DDBJ databases">
        <title>Complete structure of the chloroplast genome of Populus alba.</title>
        <authorList>
            <person name="Okumura S."/>
            <person name="Yamashita A."/>
            <person name="Kanamoto H."/>
            <person name="Hattori M."/>
            <person name="Takase H."/>
            <person name="Tomizawa K."/>
        </authorList>
    </citation>
    <scope>NUCLEOTIDE SEQUENCE [LARGE SCALE GENOMIC DNA]</scope>
</reference>
<protein>
    <recommendedName>
        <fullName evidence="1">Photosystem I assembly protein Ycf4</fullName>
    </recommendedName>
</protein>
<organism>
    <name type="scientific">Populus alba</name>
    <name type="common">White poplar</name>
    <dbReference type="NCBI Taxonomy" id="43335"/>
    <lineage>
        <taxon>Eukaryota</taxon>
        <taxon>Viridiplantae</taxon>
        <taxon>Streptophyta</taxon>
        <taxon>Embryophyta</taxon>
        <taxon>Tracheophyta</taxon>
        <taxon>Spermatophyta</taxon>
        <taxon>Magnoliopsida</taxon>
        <taxon>eudicotyledons</taxon>
        <taxon>Gunneridae</taxon>
        <taxon>Pentapetalae</taxon>
        <taxon>rosids</taxon>
        <taxon>fabids</taxon>
        <taxon>Malpighiales</taxon>
        <taxon>Salicaceae</taxon>
        <taxon>Saliceae</taxon>
        <taxon>Populus</taxon>
    </lineage>
</organism>
<keyword id="KW-0150">Chloroplast</keyword>
<keyword id="KW-0472">Membrane</keyword>
<keyword id="KW-0602">Photosynthesis</keyword>
<keyword id="KW-0934">Plastid</keyword>
<keyword id="KW-0793">Thylakoid</keyword>
<keyword id="KW-0812">Transmembrane</keyword>
<keyword id="KW-1133">Transmembrane helix</keyword>
<geneLocation type="chloroplast"/>